<comment type="function">
    <text evidence="3 4">Glucose and N-acetylglucosamine binding lectin. Has hemagglutinating activity against human and rabbit erythrocytes which does not require divalent cations. Inhibits factor Xa and, to a lesser extent, trypsin. Does not inhibit neutrophil elastase, human plasma kallikrein, papain, human plasmin, porcine pancreatic kallikrein and bovin chymotrypsin. Has insecticidal activity against the termite species N.corniger. Induces apoptosis in prostrate cancer cell lines DU145 and PC3.</text>
</comment>
<comment type="biophysicochemical properties">
    <temperatureDependence>
        <text evidence="3">Hemagglutinating activity is stable between 30 and 60 degrees Celsius.</text>
    </temperatureDependence>
</comment>
<comment type="subunit">
    <text evidence="3">Dimer.</text>
</comment>
<comment type="toxic dose">
    <text evidence="3">LD(50) is 0.45 mg/ml against the termite species N.corniger.</text>
</comment>
<comment type="similarity">
    <text evidence="2">Belongs to the protease inhibitor I3 (leguminous Kunitz-type inhibitor) family.</text>
</comment>
<comment type="caution">
    <text evidence="7 8 9">Characterization did not differentiate between the two isoforms determined by protein sequencing (PubMed:22195573, PubMed:23823708).</text>
</comment>
<sequence length="165" mass="18166">AILTGVPYYILPSTSRAGFSPDNLRKNTSQLSCPLDLITQLRFPRRIGVPVIFTPQNSSLKVVPLSHNLNIHTCSDLWFCPESKIWTVKSSLTHGGSVVTTGGTFRSLGSWFRIERHGDSYKLVHCPRGSTPCRDVGIETVGGGGRRYLAPRDRPLAVRFTRASG</sequence>
<organism>
    <name type="scientific">Crateva tapia</name>
    <name type="common">Garlic-pear tree</name>
    <name type="synonym">Crataeva tapia</name>
    <dbReference type="NCBI Taxonomy" id="202635"/>
    <lineage>
        <taxon>Eukaryota</taxon>
        <taxon>Viridiplantae</taxon>
        <taxon>Streptophyta</taxon>
        <taxon>Embryophyta</taxon>
        <taxon>Tracheophyta</taxon>
        <taxon>Spermatophyta</taxon>
        <taxon>Magnoliopsida</taxon>
        <taxon>eudicotyledons</taxon>
        <taxon>Gunneridae</taxon>
        <taxon>Pentapetalae</taxon>
        <taxon>rosids</taxon>
        <taxon>malvids</taxon>
        <taxon>Brassicales</taxon>
        <taxon>Capparaceae</taxon>
        <taxon>Crateva</taxon>
    </lineage>
</organism>
<reference evidence="7" key="1">
    <citation type="journal article" date="2013" name="PLoS ONE">
        <title>Crystal structure of Crataeva tapia bark protein (CrataBL) and its effect in human prostate cancer cell lines.</title>
        <authorList>
            <person name="Ferreira R.D."/>
            <person name="Zhou D."/>
            <person name="Ferreira J.G."/>
            <person name="Silva M.C."/>
            <person name="Silva-Lucca R.A."/>
            <person name="Mentele R."/>
            <person name="Paredes-Gamero E.J."/>
            <person name="Bertolin T.C."/>
            <person name="Dos Santos Correia M.T."/>
            <person name="Paiva P.M."/>
            <person name="Gustchina A."/>
            <person name="Wlodawer A."/>
            <person name="Oliva M.L."/>
        </authorList>
    </citation>
    <scope>PROTEIN SEQUENCE</scope>
    <scope>FUNCTION</scope>
    <source>
        <tissue evidence="4">Bark</tissue>
    </source>
</reference>
<reference evidence="7" key="2">
    <citation type="journal article" date="2012" name="Plant Sci.">
        <title>Crataeva tapia bark lectin is an affinity adsorbent and insecticidal agent.</title>
        <authorList>
            <person name="Araujo R.M."/>
            <person name="Ferreira R.S."/>
            <person name="Napoleao T.H."/>
            <person name="Carneiro-da-Cunha M."/>
            <person name="Coelho L.C."/>
            <person name="Correia M.T."/>
            <person name="Oliva M.L."/>
            <person name="Paiva P.M."/>
        </authorList>
    </citation>
    <scope>PROTEIN SEQUENCE OF 2-19</scope>
    <scope>FUNCTION</scope>
    <scope>BIOPHYSICOCHEMICAL PROPERTIES</scope>
    <scope>SUBUNIT</scope>
    <scope>TOXIC DOSE</scope>
    <source>
        <tissue evidence="3">Bark</tissue>
    </source>
</reference>
<protein>
    <recommendedName>
        <fullName evidence="5 6">Bark lectin isoform 2</fullName>
        <shortName evidence="6">CrataBL</shortName>
        <shortName evidence="5 6">CrataBL-form II</shortName>
    </recommendedName>
</protein>
<name>LECB2_CRATA</name>
<accession>C0HJA4</accession>
<proteinExistence type="evidence at protein level"/>
<keyword id="KW-0903">Direct protein sequencing</keyword>
<keyword id="KW-1015">Disulfide bond</keyword>
<keyword id="KW-0325">Glycoprotein</keyword>
<keyword id="KW-0348">Hemagglutinin</keyword>
<keyword id="KW-0430">Lectin</keyword>
<keyword id="KW-0646">Protease inhibitor</keyword>
<keyword id="KW-0722">Serine protease inhibitor</keyword>
<keyword id="KW-0800">Toxin</keyword>
<dbReference type="SMR" id="C0HJA4"/>
<dbReference type="GO" id="GO:0030246">
    <property type="term" value="F:carbohydrate binding"/>
    <property type="evidence" value="ECO:0007669"/>
    <property type="project" value="UniProtKB-KW"/>
</dbReference>
<dbReference type="GO" id="GO:0004867">
    <property type="term" value="F:serine-type endopeptidase inhibitor activity"/>
    <property type="evidence" value="ECO:0007669"/>
    <property type="project" value="UniProtKB-KW"/>
</dbReference>
<dbReference type="GO" id="GO:0090729">
    <property type="term" value="F:toxin activity"/>
    <property type="evidence" value="ECO:0007669"/>
    <property type="project" value="UniProtKB-KW"/>
</dbReference>
<dbReference type="CDD" id="cd23374">
    <property type="entry name" value="beta-trefoil_STI_CrataBL-like"/>
    <property type="match status" value="1"/>
</dbReference>
<dbReference type="Gene3D" id="2.80.10.50">
    <property type="match status" value="1"/>
</dbReference>
<dbReference type="InterPro" id="IPR011065">
    <property type="entry name" value="Kunitz_inhibitor_STI-like_sf"/>
</dbReference>
<dbReference type="InterPro" id="IPR002160">
    <property type="entry name" value="Prot_inh_Kunz-lg"/>
</dbReference>
<dbReference type="PANTHER" id="PTHR33107">
    <property type="entry name" value="KUNITZ TRYPSIN INHIBITOR 2"/>
    <property type="match status" value="1"/>
</dbReference>
<dbReference type="PANTHER" id="PTHR33107:SF5">
    <property type="entry name" value="KUNITZ TRYPSIN INHIBITOR 5"/>
    <property type="match status" value="1"/>
</dbReference>
<dbReference type="Pfam" id="PF00197">
    <property type="entry name" value="Kunitz_legume"/>
    <property type="match status" value="1"/>
</dbReference>
<dbReference type="SMART" id="SM00452">
    <property type="entry name" value="STI"/>
    <property type="match status" value="1"/>
</dbReference>
<dbReference type="SUPFAM" id="SSF50386">
    <property type="entry name" value="STI-like"/>
    <property type="match status" value="1"/>
</dbReference>
<feature type="chain" id="PRO_0000430495" description="Bark lectin isoform 2">
    <location>
        <begin position="1"/>
        <end position="165"/>
    </location>
</feature>
<feature type="glycosylation site" description="N-linked (GlcNAc...) asparagine" evidence="2">
    <location>
        <position position="27"/>
    </location>
</feature>
<feature type="glycosylation site" description="N-linked (GlcNAc...) asparagine" evidence="2">
    <location>
        <position position="57"/>
    </location>
</feature>
<feature type="disulfide bond" evidence="1">
    <location>
        <begin position="33"/>
        <end position="80"/>
    </location>
</feature>
<feature type="disulfide bond" evidence="1">
    <location>
        <begin position="126"/>
        <end position="133"/>
    </location>
</feature>
<evidence type="ECO:0000250" key="1">
    <source>
        <dbReference type="UniProtKB" id="U3KRG0"/>
    </source>
</evidence>
<evidence type="ECO:0000255" key="2"/>
<evidence type="ECO:0000269" key="3">
    <source>
    </source>
</evidence>
<evidence type="ECO:0000269" key="4">
    <source>
    </source>
</evidence>
<evidence type="ECO:0000303" key="5">
    <source>
    </source>
</evidence>
<evidence type="ECO:0000303" key="6">
    <source>
    </source>
</evidence>
<evidence type="ECO:0000305" key="7"/>
<evidence type="ECO:0000305" key="8">
    <source>
    </source>
</evidence>
<evidence type="ECO:0000305" key="9">
    <source>
    </source>
</evidence>